<keyword id="KW-0227">DNA damage</keyword>
<keyword id="KW-0234">DNA repair</keyword>
<keyword id="KW-0539">Nucleus</keyword>
<keyword id="KW-0597">Phosphoprotein</keyword>
<keyword id="KW-1185">Reference proteome</keyword>
<keyword id="KW-0677">Repeat</keyword>
<keyword id="KW-0833">Ubl conjugation pathway</keyword>
<comment type="function">
    <text evidence="5">Involved in postreplication repair of UV-damaged DNA. Postreplication repair functions in gap-filling of a daughter strand on replication of damaged DNA.</text>
</comment>
<comment type="function">
    <text evidence="5">Protects ubiquitin chains against dissambly by deubiquitinating enzymes thereby promoting protein degradation.</text>
</comment>
<comment type="subcellular location">
    <subcellularLocation>
        <location evidence="4">Nucleus</location>
    </subcellularLocation>
</comment>
<feature type="chain" id="PRO_0000114903" description="UV excision repair protein rhp23">
    <location>
        <begin position="1"/>
        <end position="368"/>
    </location>
</feature>
<feature type="domain" description="Ubiquitin-like" evidence="2">
    <location>
        <begin position="1"/>
        <end position="77"/>
    </location>
</feature>
<feature type="domain" description="UBA 1" evidence="1">
    <location>
        <begin position="135"/>
        <end position="185"/>
    </location>
</feature>
<feature type="domain" description="UBA 2" evidence="1">
    <location>
        <begin position="320"/>
        <end position="360"/>
    </location>
</feature>
<feature type="region of interest" description="Disordered" evidence="3">
    <location>
        <begin position="76"/>
        <end position="134"/>
    </location>
</feature>
<feature type="compositionally biased region" description="Low complexity" evidence="3">
    <location>
        <begin position="76"/>
        <end position="88"/>
    </location>
</feature>
<feature type="compositionally biased region" description="Low complexity" evidence="3">
    <location>
        <begin position="103"/>
        <end position="124"/>
    </location>
</feature>
<feature type="modified residue" description="Phosphoserine" evidence="6">
    <location>
        <position position="84"/>
    </location>
</feature>
<feature type="modified residue" description="Phosphoserine" evidence="6">
    <location>
        <position position="87"/>
    </location>
</feature>
<feature type="modified residue" description="Phosphoserine" evidence="6">
    <location>
        <position position="364"/>
    </location>
</feature>
<gene>
    <name type="primary">rhp23</name>
    <name type="ORF">SPBC2D10.12</name>
</gene>
<reference key="1">
    <citation type="journal article" date="2002" name="Nucleic Acids Res.">
        <title>Involvement of rhp23, a Schizosaccharomyces pombe homolog of the human HHR23A and Saccharomyces cerevisiae RAD23 nucleotide excision repair genes, in cell cycle control and protein ubiquitination.</title>
        <authorList>
            <person name="Elder R.T."/>
            <person name="Song X.-Q."/>
            <person name="Chen M."/>
            <person name="Hopkins K.M."/>
            <person name="Lieberman H.B."/>
            <person name="Zhao Y."/>
        </authorList>
    </citation>
    <scope>NUCLEOTIDE SEQUENCE [MRNA]</scope>
    <scope>SUBCELLULAR LOCATION</scope>
    <source>
        <strain>SP223</strain>
    </source>
</reference>
<reference key="2">
    <citation type="journal article" date="2002" name="Nature">
        <title>The genome sequence of Schizosaccharomyces pombe.</title>
        <authorList>
            <person name="Wood V."/>
            <person name="Gwilliam R."/>
            <person name="Rajandream M.A."/>
            <person name="Lyne M.H."/>
            <person name="Lyne R."/>
            <person name="Stewart A."/>
            <person name="Sgouros J.G."/>
            <person name="Peat N."/>
            <person name="Hayles J."/>
            <person name="Baker S.G."/>
            <person name="Basham D."/>
            <person name="Bowman S."/>
            <person name="Brooks K."/>
            <person name="Brown D."/>
            <person name="Brown S."/>
            <person name="Chillingworth T."/>
            <person name="Churcher C.M."/>
            <person name="Collins M."/>
            <person name="Connor R."/>
            <person name="Cronin A."/>
            <person name="Davis P."/>
            <person name="Feltwell T."/>
            <person name="Fraser A."/>
            <person name="Gentles S."/>
            <person name="Goble A."/>
            <person name="Hamlin N."/>
            <person name="Harris D.E."/>
            <person name="Hidalgo J."/>
            <person name="Hodgson G."/>
            <person name="Holroyd S."/>
            <person name="Hornsby T."/>
            <person name="Howarth S."/>
            <person name="Huckle E.J."/>
            <person name="Hunt S."/>
            <person name="Jagels K."/>
            <person name="James K.D."/>
            <person name="Jones L."/>
            <person name="Jones M."/>
            <person name="Leather S."/>
            <person name="McDonald S."/>
            <person name="McLean J."/>
            <person name="Mooney P."/>
            <person name="Moule S."/>
            <person name="Mungall K.L."/>
            <person name="Murphy L.D."/>
            <person name="Niblett D."/>
            <person name="Odell C."/>
            <person name="Oliver K."/>
            <person name="O'Neil S."/>
            <person name="Pearson D."/>
            <person name="Quail M.A."/>
            <person name="Rabbinowitsch E."/>
            <person name="Rutherford K.M."/>
            <person name="Rutter S."/>
            <person name="Saunders D."/>
            <person name="Seeger K."/>
            <person name="Sharp S."/>
            <person name="Skelton J."/>
            <person name="Simmonds M.N."/>
            <person name="Squares R."/>
            <person name="Squares S."/>
            <person name="Stevens K."/>
            <person name="Taylor K."/>
            <person name="Taylor R.G."/>
            <person name="Tivey A."/>
            <person name="Walsh S.V."/>
            <person name="Warren T."/>
            <person name="Whitehead S."/>
            <person name="Woodward J.R."/>
            <person name="Volckaert G."/>
            <person name="Aert R."/>
            <person name="Robben J."/>
            <person name="Grymonprez B."/>
            <person name="Weltjens I."/>
            <person name="Vanstreels E."/>
            <person name="Rieger M."/>
            <person name="Schaefer M."/>
            <person name="Mueller-Auer S."/>
            <person name="Gabel C."/>
            <person name="Fuchs M."/>
            <person name="Duesterhoeft A."/>
            <person name="Fritzc C."/>
            <person name="Holzer E."/>
            <person name="Moestl D."/>
            <person name="Hilbert H."/>
            <person name="Borzym K."/>
            <person name="Langer I."/>
            <person name="Beck A."/>
            <person name="Lehrach H."/>
            <person name="Reinhardt R."/>
            <person name="Pohl T.M."/>
            <person name="Eger P."/>
            <person name="Zimmermann W."/>
            <person name="Wedler H."/>
            <person name="Wambutt R."/>
            <person name="Purnelle B."/>
            <person name="Goffeau A."/>
            <person name="Cadieu E."/>
            <person name="Dreano S."/>
            <person name="Gloux S."/>
            <person name="Lelaure V."/>
            <person name="Mottier S."/>
            <person name="Galibert F."/>
            <person name="Aves S.J."/>
            <person name="Xiang Z."/>
            <person name="Hunt C."/>
            <person name="Moore K."/>
            <person name="Hurst S.M."/>
            <person name="Lucas M."/>
            <person name="Rochet M."/>
            <person name="Gaillardin C."/>
            <person name="Tallada V.A."/>
            <person name="Garzon A."/>
            <person name="Thode G."/>
            <person name="Daga R.R."/>
            <person name="Cruzado L."/>
            <person name="Jimenez J."/>
            <person name="Sanchez M."/>
            <person name="del Rey F."/>
            <person name="Benito J."/>
            <person name="Dominguez A."/>
            <person name="Revuelta J.L."/>
            <person name="Moreno S."/>
            <person name="Armstrong J."/>
            <person name="Forsburg S.L."/>
            <person name="Cerutti L."/>
            <person name="Lowe T."/>
            <person name="McCombie W.R."/>
            <person name="Paulsen I."/>
            <person name="Potashkin J."/>
            <person name="Shpakovski G.V."/>
            <person name="Ussery D."/>
            <person name="Barrell B.G."/>
            <person name="Nurse P."/>
        </authorList>
    </citation>
    <scope>NUCLEOTIDE SEQUENCE [LARGE SCALE GENOMIC DNA]</scope>
    <source>
        <strain>972 / ATCC 24843</strain>
    </source>
</reference>
<reference key="3">
    <citation type="journal article" date="2000" name="Biochem. Biophys. Res. Commun.">
        <title>Identification and characterization of the rhp23(+) DNA repair gene in Schizosaccharomyces pombe.</title>
        <authorList>
            <person name="Lombaerts M."/>
            <person name="Goeloe J.I."/>
            <person name="den Dulk H."/>
            <person name="Brandsma J.A."/>
            <person name="Brouwer J."/>
        </authorList>
    </citation>
    <scope>CHARACTERIZATION</scope>
</reference>
<reference key="4">
    <citation type="journal article" date="2003" name="FEBS Lett.">
        <title>Ubiquitin binding proteins protect ubiquitin conjugates from disassembly.</title>
        <authorList>
            <person name="Hartmann-Petersen R."/>
            <person name="Hendil K.B."/>
            <person name="Gordon C."/>
        </authorList>
    </citation>
    <scope>FUNCTION</scope>
</reference>
<reference key="5">
    <citation type="journal article" date="2008" name="J. Proteome Res.">
        <title>Phosphoproteome analysis of fission yeast.</title>
        <authorList>
            <person name="Wilson-Grady J.T."/>
            <person name="Villen J."/>
            <person name="Gygi S.P."/>
        </authorList>
    </citation>
    <scope>PHOSPHORYLATION [LARGE SCALE ANALYSIS] AT SER-84; SER-87 AND SER-364</scope>
    <scope>IDENTIFICATION BY MASS SPECTROMETRY</scope>
</reference>
<proteinExistence type="evidence at protein level"/>
<dbReference type="EMBL" id="AF174293">
    <property type="protein sequence ID" value="AAD51975.1"/>
    <property type="molecule type" value="mRNA"/>
</dbReference>
<dbReference type="EMBL" id="CU329671">
    <property type="protein sequence ID" value="CAA21170.1"/>
    <property type="molecule type" value="Genomic_DNA"/>
</dbReference>
<dbReference type="PIR" id="T40115">
    <property type="entry name" value="T40115"/>
</dbReference>
<dbReference type="RefSeq" id="NP_596231.1">
    <property type="nucleotide sequence ID" value="NM_001022151.2"/>
</dbReference>
<dbReference type="SMR" id="O74803"/>
<dbReference type="BioGRID" id="277009">
    <property type="interactions" value="38"/>
</dbReference>
<dbReference type="FunCoup" id="O74803">
    <property type="interactions" value="700"/>
</dbReference>
<dbReference type="MINT" id="O74803"/>
<dbReference type="STRING" id="284812.O74803"/>
<dbReference type="iPTMnet" id="O74803"/>
<dbReference type="PaxDb" id="4896-SPBC2D10.12.1"/>
<dbReference type="EnsemblFungi" id="SPBC2D10.12.1">
    <property type="protein sequence ID" value="SPBC2D10.12.1:pep"/>
    <property type="gene ID" value="SPBC2D10.12"/>
</dbReference>
<dbReference type="GeneID" id="2540481"/>
<dbReference type="KEGG" id="spo:2540481"/>
<dbReference type="PomBase" id="SPBC2D10.12">
    <property type="gene designation" value="rhp23"/>
</dbReference>
<dbReference type="VEuPathDB" id="FungiDB:SPBC2D10.12"/>
<dbReference type="eggNOG" id="KOG0011">
    <property type="taxonomic scope" value="Eukaryota"/>
</dbReference>
<dbReference type="HOGENOM" id="CLU_040364_0_0_1"/>
<dbReference type="InParanoid" id="O74803"/>
<dbReference type="OMA" id="PHMLEPI"/>
<dbReference type="PhylomeDB" id="O74803"/>
<dbReference type="Reactome" id="R-SPO-5696395">
    <property type="pathway name" value="Formation of Incision Complex in GG-NER"/>
</dbReference>
<dbReference type="PRO" id="PR:O74803"/>
<dbReference type="Proteomes" id="UP000002485">
    <property type="component" value="Chromosome II"/>
</dbReference>
<dbReference type="GO" id="GO:0005829">
    <property type="term" value="C:cytosol"/>
    <property type="evidence" value="ECO:0007005"/>
    <property type="project" value="PomBase"/>
</dbReference>
<dbReference type="GO" id="GO:0005635">
    <property type="term" value="C:nuclear envelope"/>
    <property type="evidence" value="ECO:0007005"/>
    <property type="project" value="PomBase"/>
</dbReference>
<dbReference type="GO" id="GO:0005654">
    <property type="term" value="C:nucleoplasm"/>
    <property type="evidence" value="ECO:0000318"/>
    <property type="project" value="GO_Central"/>
</dbReference>
<dbReference type="GO" id="GO:0005634">
    <property type="term" value="C:nucleus"/>
    <property type="evidence" value="ECO:0000314"/>
    <property type="project" value="PomBase"/>
</dbReference>
<dbReference type="GO" id="GO:0003684">
    <property type="term" value="F:damaged DNA binding"/>
    <property type="evidence" value="ECO:0000266"/>
    <property type="project" value="PomBase"/>
</dbReference>
<dbReference type="GO" id="GO:0031593">
    <property type="term" value="F:polyubiquitin modification-dependent protein binding"/>
    <property type="evidence" value="ECO:0000318"/>
    <property type="project" value="GO_Central"/>
</dbReference>
<dbReference type="GO" id="GO:0070628">
    <property type="term" value="F:proteasome binding"/>
    <property type="evidence" value="ECO:0000318"/>
    <property type="project" value="GO_Central"/>
</dbReference>
<dbReference type="GO" id="GO:0043130">
    <property type="term" value="F:ubiquitin binding"/>
    <property type="evidence" value="ECO:0000314"/>
    <property type="project" value="PomBase"/>
</dbReference>
<dbReference type="GO" id="GO:0036503">
    <property type="term" value="P:ERAD pathway"/>
    <property type="evidence" value="ECO:0000266"/>
    <property type="project" value="PomBase"/>
</dbReference>
<dbReference type="GO" id="GO:0006289">
    <property type="term" value="P:nucleotide-excision repair"/>
    <property type="evidence" value="ECO:0000315"/>
    <property type="project" value="PomBase"/>
</dbReference>
<dbReference type="GO" id="GO:0043161">
    <property type="term" value="P:proteasome-mediated ubiquitin-dependent protein catabolic process"/>
    <property type="evidence" value="ECO:0000318"/>
    <property type="project" value="GO_Central"/>
</dbReference>
<dbReference type="CDD" id="cd14378">
    <property type="entry name" value="UBA1_Rhp23p_like"/>
    <property type="match status" value="1"/>
</dbReference>
<dbReference type="CDD" id="cd14381">
    <property type="entry name" value="UBA2_Rhp23p_like"/>
    <property type="match status" value="1"/>
</dbReference>
<dbReference type="CDD" id="cd01805">
    <property type="entry name" value="Ubl_Rad23"/>
    <property type="match status" value="1"/>
</dbReference>
<dbReference type="FunFam" id="3.10.20.90:FF:000254">
    <property type="entry name" value="UV excision repair protein Rad23"/>
    <property type="match status" value="1"/>
</dbReference>
<dbReference type="FunFam" id="1.10.10.540:FF:000001">
    <property type="entry name" value="UV excision repair protein RAD23 B"/>
    <property type="match status" value="1"/>
</dbReference>
<dbReference type="FunFam" id="1.10.8.10:FF:000002">
    <property type="entry name" value="UV excision repair protein RAD23 homolog"/>
    <property type="match status" value="1"/>
</dbReference>
<dbReference type="FunFam" id="1.10.8.10:FF:000003">
    <property type="entry name" value="UV excision repair protein RAD23 homolog"/>
    <property type="match status" value="1"/>
</dbReference>
<dbReference type="Gene3D" id="1.10.8.10">
    <property type="entry name" value="DNA helicase RuvA subunit, C-terminal domain"/>
    <property type="match status" value="2"/>
</dbReference>
<dbReference type="Gene3D" id="3.10.20.90">
    <property type="entry name" value="Phosphatidylinositol 3-kinase Catalytic Subunit, Chain A, domain 1"/>
    <property type="match status" value="1"/>
</dbReference>
<dbReference type="Gene3D" id="1.10.10.540">
    <property type="entry name" value="XPC-binding domain"/>
    <property type="match status" value="1"/>
</dbReference>
<dbReference type="InterPro" id="IPR004806">
    <property type="entry name" value="Rad23"/>
</dbReference>
<dbReference type="InterPro" id="IPR006636">
    <property type="entry name" value="STI1_HS-bd"/>
</dbReference>
<dbReference type="InterPro" id="IPR015940">
    <property type="entry name" value="UBA"/>
</dbReference>
<dbReference type="InterPro" id="IPR009060">
    <property type="entry name" value="UBA-like_sf"/>
</dbReference>
<dbReference type="InterPro" id="IPR000626">
    <property type="entry name" value="Ubiquitin-like_dom"/>
</dbReference>
<dbReference type="InterPro" id="IPR029071">
    <property type="entry name" value="Ubiquitin-like_domsf"/>
</dbReference>
<dbReference type="InterPro" id="IPR015360">
    <property type="entry name" value="XPC-bd"/>
</dbReference>
<dbReference type="InterPro" id="IPR036353">
    <property type="entry name" value="XPC-bd_sf"/>
</dbReference>
<dbReference type="NCBIfam" id="TIGR00601">
    <property type="entry name" value="rad23"/>
    <property type="match status" value="1"/>
</dbReference>
<dbReference type="PANTHER" id="PTHR10621">
    <property type="entry name" value="UV EXCISION REPAIR PROTEIN RAD23"/>
    <property type="match status" value="1"/>
</dbReference>
<dbReference type="PANTHER" id="PTHR10621:SF0">
    <property type="entry name" value="UV EXCISION REPAIR PROTEIN RAD23"/>
    <property type="match status" value="1"/>
</dbReference>
<dbReference type="Pfam" id="PF00627">
    <property type="entry name" value="UBA"/>
    <property type="match status" value="2"/>
</dbReference>
<dbReference type="Pfam" id="PF00240">
    <property type="entry name" value="ubiquitin"/>
    <property type="match status" value="1"/>
</dbReference>
<dbReference type="Pfam" id="PF09280">
    <property type="entry name" value="XPC-binding"/>
    <property type="match status" value="1"/>
</dbReference>
<dbReference type="PRINTS" id="PR01839">
    <property type="entry name" value="RAD23PROTEIN"/>
</dbReference>
<dbReference type="SMART" id="SM00727">
    <property type="entry name" value="STI1"/>
    <property type="match status" value="1"/>
</dbReference>
<dbReference type="SMART" id="SM00165">
    <property type="entry name" value="UBA"/>
    <property type="match status" value="2"/>
</dbReference>
<dbReference type="SMART" id="SM00213">
    <property type="entry name" value="UBQ"/>
    <property type="match status" value="1"/>
</dbReference>
<dbReference type="SUPFAM" id="SSF46934">
    <property type="entry name" value="UBA-like"/>
    <property type="match status" value="2"/>
</dbReference>
<dbReference type="SUPFAM" id="SSF54236">
    <property type="entry name" value="Ubiquitin-like"/>
    <property type="match status" value="1"/>
</dbReference>
<dbReference type="SUPFAM" id="SSF101238">
    <property type="entry name" value="XPC-binding domain"/>
    <property type="match status" value="1"/>
</dbReference>
<dbReference type="PROSITE" id="PS50030">
    <property type="entry name" value="UBA"/>
    <property type="match status" value="2"/>
</dbReference>
<dbReference type="PROSITE" id="PS50053">
    <property type="entry name" value="UBIQUITIN_2"/>
    <property type="match status" value="1"/>
</dbReference>
<accession>O74803</accession>
<organism>
    <name type="scientific">Schizosaccharomyces pombe (strain 972 / ATCC 24843)</name>
    <name type="common">Fission yeast</name>
    <dbReference type="NCBI Taxonomy" id="284812"/>
    <lineage>
        <taxon>Eukaryota</taxon>
        <taxon>Fungi</taxon>
        <taxon>Dikarya</taxon>
        <taxon>Ascomycota</taxon>
        <taxon>Taphrinomycotina</taxon>
        <taxon>Schizosaccharomycetes</taxon>
        <taxon>Schizosaccharomycetales</taxon>
        <taxon>Schizosaccharomycetaceae</taxon>
        <taxon>Schizosaccharomyces</taxon>
    </lineage>
</organism>
<name>RHP23_SCHPO</name>
<sequence length="368" mass="40135">MNLTFKNLQQQKFVISDVSADTKISELKEKIQTQQNYEVERQKLIYSGRILADDKTVGEYNIKEQDFIVCMVSRPKTSTSTPKSAASPAPNPPASVPEKKVEAPSSTVAESTSTTQTVAAAAPSNPDTTATSEAPIDANTLAVGAQRNVAVENMVEMGYERSEVERAMRAAFNNPDRAVEYLLTGIPEDILNRQREESAAALAAQQQQSEALAPTSTGQPANLFEQAALSENENQEQPSNTVGDDPLGFLRSIPQFQQLRQIVQQNPQMLETILQQIGQGDPALAQAITQNPEAFLQLLAEGAEGESALPSGGIQIQITQEESESIDRLCQLGFDRNIVIQAYLACDKNEELAANYLFEHGHESEDEP</sequence>
<protein>
    <recommendedName>
        <fullName>UV excision repair protein rhp23</fullName>
    </recommendedName>
    <alternativeName>
        <fullName>RAD23 homolog</fullName>
    </alternativeName>
</protein>
<evidence type="ECO:0000255" key="1">
    <source>
        <dbReference type="PROSITE-ProRule" id="PRU00212"/>
    </source>
</evidence>
<evidence type="ECO:0000255" key="2">
    <source>
        <dbReference type="PROSITE-ProRule" id="PRU00214"/>
    </source>
</evidence>
<evidence type="ECO:0000256" key="3">
    <source>
        <dbReference type="SAM" id="MobiDB-lite"/>
    </source>
</evidence>
<evidence type="ECO:0000269" key="4">
    <source>
    </source>
</evidence>
<evidence type="ECO:0000269" key="5">
    <source>
    </source>
</evidence>
<evidence type="ECO:0000269" key="6">
    <source>
    </source>
</evidence>